<sequence>MTLTVLTIVIIVGAYLAGSVSSAVLVCKIRGLPDPRTQGSGNPGATNVLRIGGASSAALVLFCDMLKGAAPAYLAFRLGVDPIALGVIAIAACLGHIFPIFFGFKGGKGVATAFGAMAPIGHDLALCLLASWIVLVLVTRYSSFAAICTALLAPVYTWWLDDRFTIPVAMLSTLIVIRHKDNIKRLLKGEESKVSRKKT</sequence>
<gene>
    <name evidence="1" type="primary">plsY</name>
    <name type="ordered locus">Shal_1010</name>
</gene>
<name>PLSY_SHEHH</name>
<feature type="chain" id="PRO_1000084395" description="Glycerol-3-phosphate acyltransferase">
    <location>
        <begin position="1"/>
        <end position="199"/>
    </location>
</feature>
<feature type="transmembrane region" description="Helical" evidence="1">
    <location>
        <begin position="5"/>
        <end position="25"/>
    </location>
</feature>
<feature type="transmembrane region" description="Helical" evidence="1">
    <location>
        <begin position="56"/>
        <end position="76"/>
    </location>
</feature>
<feature type="transmembrane region" description="Helical" evidence="1">
    <location>
        <begin position="83"/>
        <end position="103"/>
    </location>
</feature>
<feature type="transmembrane region" description="Helical" evidence="1">
    <location>
        <begin position="118"/>
        <end position="138"/>
    </location>
</feature>
<feature type="transmembrane region" description="Helical" evidence="1">
    <location>
        <begin position="141"/>
        <end position="161"/>
    </location>
</feature>
<keyword id="KW-0997">Cell inner membrane</keyword>
<keyword id="KW-1003">Cell membrane</keyword>
<keyword id="KW-0444">Lipid biosynthesis</keyword>
<keyword id="KW-0443">Lipid metabolism</keyword>
<keyword id="KW-0472">Membrane</keyword>
<keyword id="KW-0594">Phospholipid biosynthesis</keyword>
<keyword id="KW-1208">Phospholipid metabolism</keyword>
<keyword id="KW-0808">Transferase</keyword>
<keyword id="KW-0812">Transmembrane</keyword>
<keyword id="KW-1133">Transmembrane helix</keyword>
<evidence type="ECO:0000255" key="1">
    <source>
        <dbReference type="HAMAP-Rule" id="MF_01043"/>
    </source>
</evidence>
<organism>
    <name type="scientific">Shewanella halifaxensis (strain HAW-EB4)</name>
    <dbReference type="NCBI Taxonomy" id="458817"/>
    <lineage>
        <taxon>Bacteria</taxon>
        <taxon>Pseudomonadati</taxon>
        <taxon>Pseudomonadota</taxon>
        <taxon>Gammaproteobacteria</taxon>
        <taxon>Alteromonadales</taxon>
        <taxon>Shewanellaceae</taxon>
        <taxon>Shewanella</taxon>
    </lineage>
</organism>
<accession>B0TIN9</accession>
<protein>
    <recommendedName>
        <fullName evidence="1">Glycerol-3-phosphate acyltransferase</fullName>
    </recommendedName>
    <alternativeName>
        <fullName evidence="1">Acyl-PO4 G3P acyltransferase</fullName>
    </alternativeName>
    <alternativeName>
        <fullName evidence="1">Acyl-phosphate--glycerol-3-phosphate acyltransferase</fullName>
    </alternativeName>
    <alternativeName>
        <fullName evidence="1">G3P acyltransferase</fullName>
        <shortName evidence="1">GPAT</shortName>
        <ecNumber evidence="1">2.3.1.275</ecNumber>
    </alternativeName>
    <alternativeName>
        <fullName evidence="1">Lysophosphatidic acid synthase</fullName>
        <shortName evidence="1">LPA synthase</shortName>
    </alternativeName>
</protein>
<dbReference type="EC" id="2.3.1.275" evidence="1"/>
<dbReference type="EMBL" id="CP000931">
    <property type="protein sequence ID" value="ABZ75584.1"/>
    <property type="molecule type" value="Genomic_DNA"/>
</dbReference>
<dbReference type="RefSeq" id="WP_012276132.1">
    <property type="nucleotide sequence ID" value="NC_010334.1"/>
</dbReference>
<dbReference type="SMR" id="B0TIN9"/>
<dbReference type="STRING" id="458817.Shal_1010"/>
<dbReference type="KEGG" id="shl:Shal_1010"/>
<dbReference type="eggNOG" id="COG0344">
    <property type="taxonomic scope" value="Bacteria"/>
</dbReference>
<dbReference type="HOGENOM" id="CLU_081254_0_2_6"/>
<dbReference type="OrthoDB" id="9777124at2"/>
<dbReference type="UniPathway" id="UPA00085"/>
<dbReference type="Proteomes" id="UP000001317">
    <property type="component" value="Chromosome"/>
</dbReference>
<dbReference type="GO" id="GO:0005886">
    <property type="term" value="C:plasma membrane"/>
    <property type="evidence" value="ECO:0007669"/>
    <property type="project" value="UniProtKB-SubCell"/>
</dbReference>
<dbReference type="GO" id="GO:0043772">
    <property type="term" value="F:acyl-phosphate glycerol-3-phosphate acyltransferase activity"/>
    <property type="evidence" value="ECO:0007669"/>
    <property type="project" value="UniProtKB-UniRule"/>
</dbReference>
<dbReference type="GO" id="GO:0008654">
    <property type="term" value="P:phospholipid biosynthetic process"/>
    <property type="evidence" value="ECO:0007669"/>
    <property type="project" value="UniProtKB-UniRule"/>
</dbReference>
<dbReference type="HAMAP" id="MF_01043">
    <property type="entry name" value="PlsY"/>
    <property type="match status" value="1"/>
</dbReference>
<dbReference type="InterPro" id="IPR003811">
    <property type="entry name" value="G3P_acylTferase_PlsY"/>
</dbReference>
<dbReference type="NCBIfam" id="TIGR00023">
    <property type="entry name" value="glycerol-3-phosphate 1-O-acyltransferase PlsY"/>
    <property type="match status" value="1"/>
</dbReference>
<dbReference type="PANTHER" id="PTHR30309:SF0">
    <property type="entry name" value="GLYCEROL-3-PHOSPHATE ACYLTRANSFERASE-RELATED"/>
    <property type="match status" value="1"/>
</dbReference>
<dbReference type="PANTHER" id="PTHR30309">
    <property type="entry name" value="INNER MEMBRANE PROTEIN YGIH"/>
    <property type="match status" value="1"/>
</dbReference>
<dbReference type="Pfam" id="PF02660">
    <property type="entry name" value="G3P_acyltransf"/>
    <property type="match status" value="1"/>
</dbReference>
<dbReference type="SMART" id="SM01207">
    <property type="entry name" value="G3P_acyltransf"/>
    <property type="match status" value="1"/>
</dbReference>
<comment type="function">
    <text evidence="1">Catalyzes the transfer of an acyl group from acyl-phosphate (acyl-PO(4)) to glycerol-3-phosphate (G3P) to form lysophosphatidic acid (LPA). This enzyme utilizes acyl-phosphate as fatty acyl donor, but not acyl-CoA or acyl-ACP.</text>
</comment>
<comment type="catalytic activity">
    <reaction evidence="1">
        <text>an acyl phosphate + sn-glycerol 3-phosphate = a 1-acyl-sn-glycero-3-phosphate + phosphate</text>
        <dbReference type="Rhea" id="RHEA:34075"/>
        <dbReference type="ChEBI" id="CHEBI:43474"/>
        <dbReference type="ChEBI" id="CHEBI:57597"/>
        <dbReference type="ChEBI" id="CHEBI:57970"/>
        <dbReference type="ChEBI" id="CHEBI:59918"/>
        <dbReference type="EC" id="2.3.1.275"/>
    </reaction>
</comment>
<comment type="pathway">
    <text evidence="1">Lipid metabolism; phospholipid metabolism.</text>
</comment>
<comment type="subunit">
    <text evidence="1">Probably interacts with PlsX.</text>
</comment>
<comment type="subcellular location">
    <subcellularLocation>
        <location evidence="1">Cell inner membrane</location>
        <topology evidence="1">Multi-pass membrane protein</topology>
    </subcellularLocation>
</comment>
<comment type="similarity">
    <text evidence="1">Belongs to the PlsY family.</text>
</comment>
<reference key="1">
    <citation type="submission" date="2008-01" db="EMBL/GenBank/DDBJ databases">
        <title>Complete sequence of Shewanella halifaxensis HAW-EB4.</title>
        <authorList>
            <consortium name="US DOE Joint Genome Institute"/>
            <person name="Copeland A."/>
            <person name="Lucas S."/>
            <person name="Lapidus A."/>
            <person name="Glavina del Rio T."/>
            <person name="Dalin E."/>
            <person name="Tice H."/>
            <person name="Bruce D."/>
            <person name="Goodwin L."/>
            <person name="Pitluck S."/>
            <person name="Sims D."/>
            <person name="Brettin T."/>
            <person name="Detter J.C."/>
            <person name="Han C."/>
            <person name="Kuske C.R."/>
            <person name="Schmutz J."/>
            <person name="Larimer F."/>
            <person name="Land M."/>
            <person name="Hauser L."/>
            <person name="Kyrpides N."/>
            <person name="Kim E."/>
            <person name="Zhao J.-S."/>
            <person name="Richardson P."/>
        </authorList>
    </citation>
    <scope>NUCLEOTIDE SEQUENCE [LARGE SCALE GENOMIC DNA]</scope>
    <source>
        <strain>HAW-EB4</strain>
    </source>
</reference>
<proteinExistence type="inferred from homology"/>